<dbReference type="EMBL" id="AF456131">
    <property type="protein sequence ID" value="AAL67719.1"/>
    <property type="molecule type" value="Genomic_DNA"/>
</dbReference>
<dbReference type="EMBL" id="AF456132">
    <property type="protein sequence ID" value="AAL67722.1"/>
    <property type="molecule type" value="Genomic_DNA"/>
</dbReference>
<dbReference type="RefSeq" id="WP_041906074.1">
    <property type="nucleotide sequence ID" value="NZ_SIWZ01000001.1"/>
</dbReference>
<dbReference type="SMR" id="P0CY50"/>
<dbReference type="GO" id="GO:0005576">
    <property type="term" value="C:extracellular region"/>
    <property type="evidence" value="ECO:0007669"/>
    <property type="project" value="UniProtKB-SubCell"/>
</dbReference>
<dbReference type="GO" id="GO:0005186">
    <property type="term" value="F:pheromone activity"/>
    <property type="evidence" value="ECO:0007669"/>
    <property type="project" value="UniProtKB-KW"/>
</dbReference>
<dbReference type="GO" id="GO:0030420">
    <property type="term" value="P:establishment of competence for transformation"/>
    <property type="evidence" value="ECO:0007669"/>
    <property type="project" value="UniProtKB-KW"/>
</dbReference>
<dbReference type="GO" id="GO:0030435">
    <property type="term" value="P:sporulation resulting in formation of a cellular spore"/>
    <property type="evidence" value="ECO:0007669"/>
    <property type="project" value="UniProtKB-KW"/>
</dbReference>
<dbReference type="InterPro" id="IPR009233">
    <property type="entry name" value="Competence_ComX_Bacillus"/>
</dbReference>
<dbReference type="Pfam" id="PF05952">
    <property type="entry name" value="ComX"/>
    <property type="match status" value="1"/>
</dbReference>
<protein>
    <recommendedName>
        <fullName evidence="6">ComX pheromone</fullName>
    </recommendedName>
    <alternativeName>
        <fullName evidence="6">Competence pheromone</fullName>
    </alternativeName>
</protein>
<sequence>MKQDMIDYLMKNPQVLTKLENGEASLIGIPDKLIPSIVDIFNKKMTLSKKCKGIFWEQ</sequence>
<accession>P0CY50</accession>
<accession>Q8VL79</accession>
<gene>
    <name evidence="5" type="primary">comX</name>
</gene>
<keyword id="KW-0178">Competence</keyword>
<keyword id="KW-0449">Lipoprotein</keyword>
<keyword id="KW-0588">Pheromone</keyword>
<keyword id="KW-0636">Prenylation</keyword>
<keyword id="KW-0964">Secreted</keyword>
<keyword id="KW-0749">Sporulation</keyword>
<organism>
    <name type="scientific">Bacillus subtilis</name>
    <dbReference type="NCBI Taxonomy" id="1423"/>
    <lineage>
        <taxon>Bacteria</taxon>
        <taxon>Bacillati</taxon>
        <taxon>Bacillota</taxon>
        <taxon>Bacilli</taxon>
        <taxon>Bacillales</taxon>
        <taxon>Bacillaceae</taxon>
        <taxon>Bacillus</taxon>
    </lineage>
</organism>
<reference key="1">
    <citation type="journal article" date="2002" name="Mol. Microbiol.">
        <title>Specific activation of the Bacillus quorum-sensing systems by isoprenylated pheromone variants.</title>
        <authorList>
            <person name="Ansaldi M."/>
            <person name="Marolt D."/>
            <person name="Stebe T."/>
            <person name="Mandic-Mulec I."/>
            <person name="Dubnau D."/>
        </authorList>
    </citation>
    <scope>NUCLEOTIDE SEQUENCE [GENOMIC DNA]</scope>
    <source>
        <strain>168 / RO-A-4</strain>
        <strain>168 / RO-PP-2</strain>
    </source>
</reference>
<reference key="2">
    <citation type="journal article" date="2001" name="J. Bacteriol.">
        <title>Specificity and genetic polymorphism of the Bacillus competence quorum-sensing system.</title>
        <authorList>
            <person name="Tortosa P."/>
            <person name="Logsdon L."/>
            <person name="Kraigher B."/>
            <person name="Itoh Y."/>
            <person name="Mandic-Mulec I."/>
            <person name="Dubnau D."/>
        </authorList>
    </citation>
    <scope>POLYMORPHISM IN COMX; COMQ AND COMP</scope>
</reference>
<reference key="3">
    <citation type="journal article" date="2004" name="J. Bacteriol.">
        <title>Diversifying selection at the Bacillus quorum-sensing locus and determinants of modification specificity during synthesis of the ComX pheromone.</title>
        <authorList>
            <person name="Ansaldi M."/>
            <person name="Dubnau D."/>
        </authorList>
    </citation>
    <scope>POLYMORPHISM</scope>
    <scope>DETERMINANTS OF MODIFICATION SPECIFICITY</scope>
</reference>
<proteinExistence type="inferred from homology"/>
<feature type="propeptide" id="PRO_0000233036">
    <location>
        <begin position="1"/>
        <end position="52"/>
    </location>
</feature>
<feature type="peptide" id="PRO_0000233037" description="ComX pheromone">
    <location>
        <begin position="53"/>
        <end position="58"/>
    </location>
</feature>
<feature type="modified residue" description="Tryptophan derivative" evidence="1">
    <location>
        <position position="56"/>
    </location>
</feature>
<comment type="function">
    <text evidence="1">Part of a major quorum-sensing system that regulates the development of genetic competence (By similarity). Acts through the activation of the two-component regulatory system ComP/ComA composed of a sensor histidine kinase, ComP, and a response regulator, ComA (By similarity).</text>
</comment>
<comment type="subunit">
    <text evidence="1">Interacts directly with the sensor histidine kinase ComP and stimulates its activity.</text>
</comment>
<comment type="subcellular location">
    <subcellularLocation>
        <location>Secreted</location>
    </subcellularLocation>
</comment>
<comment type="PTM">
    <text evidence="1 3 4">Trp-56 is modified by isoprenylation, which is essential for activity (By similarity). Modified by the tryptophan prenyltransferase ComQ before export to the extracellular environment (By similarity). The type of isoprenyl derivative differs among the different pherotypes and depends on ComX primary sequence (PubMed:12067344, PubMed:14679219).</text>
</comment>
<comment type="miscellaneous">
    <text evidence="2">The DNA sequences encoding ComQ, ComX and the N-terminal two-thirds of ComP show a striking polymorphism, which determines the specificity of the quorum-sensing system in the different pherotypes of Bacillus. In ComX, the sole conserved residue is the modified tryptophan essential for the activity.</text>
</comment>
<name>COMX_BACIU</name>
<evidence type="ECO:0000250" key="1">
    <source>
        <dbReference type="UniProtKB" id="P45453"/>
    </source>
</evidence>
<evidence type="ECO:0000269" key="2">
    <source>
    </source>
</evidence>
<evidence type="ECO:0000269" key="3">
    <source>
    </source>
</evidence>
<evidence type="ECO:0000269" key="4">
    <source>
    </source>
</evidence>
<evidence type="ECO:0000303" key="5">
    <source>
    </source>
</evidence>
<evidence type="ECO:0000305" key="6"/>